<reference key="1">
    <citation type="journal article" date="1997" name="J. Bacteriol.">
        <title>Identification and characterization of a gene encoding a vertebrate-type carbonic anhydrase in cyanobacteria.</title>
        <authorList>
            <person name="Soltes-Rak E."/>
            <person name="Mulligan M.E."/>
            <person name="Coleman J.R."/>
        </authorList>
    </citation>
    <scope>NUCLEOTIDE SEQUENCE [GENOMIC DNA]</scope>
</reference>
<reference key="2">
    <citation type="journal article" date="2001" name="DNA Res.">
        <title>Complete genomic sequence of the filamentous nitrogen-fixing cyanobacterium Anabaena sp. strain PCC 7120.</title>
        <authorList>
            <person name="Kaneko T."/>
            <person name="Nakamura Y."/>
            <person name="Wolk C.P."/>
            <person name="Kuritz T."/>
            <person name="Sasamoto S."/>
            <person name="Watanabe A."/>
            <person name="Iriguchi M."/>
            <person name="Ishikawa A."/>
            <person name="Kawashima K."/>
            <person name="Kimura T."/>
            <person name="Kishida Y."/>
            <person name="Kohara M."/>
            <person name="Matsumoto M."/>
            <person name="Matsuno A."/>
            <person name="Muraki A."/>
            <person name="Nakazaki N."/>
            <person name="Shimpo S."/>
            <person name="Sugimoto M."/>
            <person name="Takazawa M."/>
            <person name="Yamada M."/>
            <person name="Yasuda M."/>
            <person name="Tabata S."/>
        </authorList>
    </citation>
    <scope>NUCLEOTIDE SEQUENCE [LARGE SCALE GENOMIC DNA]</scope>
    <source>
        <strain>PCC 7120 / SAG 25.82 / UTEX 2576</strain>
    </source>
</reference>
<comment type="function">
    <text>Reversible hydration of carbon dioxide.</text>
</comment>
<comment type="catalytic activity">
    <reaction>
        <text>hydrogencarbonate + H(+) = CO2 + H2O</text>
        <dbReference type="Rhea" id="RHEA:10748"/>
        <dbReference type="ChEBI" id="CHEBI:15377"/>
        <dbReference type="ChEBI" id="CHEBI:15378"/>
        <dbReference type="ChEBI" id="CHEBI:16526"/>
        <dbReference type="ChEBI" id="CHEBI:17544"/>
        <dbReference type="EC" id="4.2.1.1"/>
    </reaction>
</comment>
<comment type="cofactor">
    <cofactor evidence="1">
        <name>Zn(2+)</name>
        <dbReference type="ChEBI" id="CHEBI:29105"/>
    </cofactor>
</comment>
<comment type="PTM">
    <text>Predicted to be exported by the Tat system. The position of the signal peptide cleavage has not been experimentally proven.</text>
</comment>
<comment type="similarity">
    <text evidence="4">Belongs to the alpha-carbonic anhydrase family.</text>
</comment>
<proteinExistence type="inferred from homology"/>
<feature type="signal peptide" description="Tat-type signal" evidence="2">
    <location>
        <begin position="1"/>
        <end position="33"/>
    </location>
</feature>
<feature type="chain" id="PRO_0000004263" description="Carbonic anhydrase">
    <location>
        <begin position="34"/>
        <end position="264"/>
    </location>
</feature>
<feature type="domain" description="Alpha-carbonic anhydrase" evidence="3">
    <location>
        <begin position="36"/>
        <end position="264"/>
    </location>
</feature>
<feature type="binding site" evidence="3">
    <location>
        <position position="127"/>
    </location>
    <ligand>
        <name>Zn(2+)</name>
        <dbReference type="ChEBI" id="CHEBI:29105"/>
        <note>catalytic</note>
    </ligand>
</feature>
<feature type="binding site" evidence="3">
    <location>
        <position position="129"/>
    </location>
    <ligand>
        <name>Zn(2+)</name>
        <dbReference type="ChEBI" id="CHEBI:29105"/>
        <note>catalytic</note>
    </ligand>
</feature>
<feature type="binding site" evidence="3">
    <location>
        <position position="146"/>
    </location>
    <ligand>
        <name>Zn(2+)</name>
        <dbReference type="ChEBI" id="CHEBI:29105"/>
        <note>catalytic</note>
    </ligand>
</feature>
<feature type="binding site" evidence="1">
    <location>
        <begin position="214"/>
        <end position="215"/>
    </location>
    <ligand>
        <name>substrate</name>
    </ligand>
</feature>
<keyword id="KW-0456">Lyase</keyword>
<keyword id="KW-0479">Metal-binding</keyword>
<keyword id="KW-1185">Reference proteome</keyword>
<keyword id="KW-0732">Signal</keyword>
<keyword id="KW-0862">Zinc</keyword>
<gene>
    <name type="primary">ecaA</name>
    <name type="ordered locus">all2929</name>
</gene>
<protein>
    <recommendedName>
        <fullName>Carbonic anhydrase</fullName>
        <ecNumber>4.2.1.1</ecNumber>
    </recommendedName>
    <alternativeName>
        <fullName>Carbonate dehydratase</fullName>
    </alternativeName>
</protein>
<organism>
    <name type="scientific">Nostoc sp. (strain PCC 7120 / SAG 25.82 / UTEX 2576)</name>
    <dbReference type="NCBI Taxonomy" id="103690"/>
    <lineage>
        <taxon>Bacteria</taxon>
        <taxon>Bacillati</taxon>
        <taxon>Cyanobacteriota</taxon>
        <taxon>Cyanophyceae</taxon>
        <taxon>Nostocales</taxon>
        <taxon>Nostocaceae</taxon>
        <taxon>Nostoc</taxon>
    </lineage>
</organism>
<name>CAH_NOSS1</name>
<accession>P94170</accession>
<sequence length="264" mass="29639">MSSTLYRRQLLKLLGMSVLGTSFSSCVTSPARAKTVNWGYIGKVGPEHWGELSPDFALCQIGRKQTPIDLQIADVKDVHSSSQDLLVTNYQPTALHLINNGKTVQVNYQPGSYLKYAHQKFELLQFHFHHFSEHRVDGKLYDMELHLVHRSKSGDLAVMGIFLQAGAFNPTLQIIWDATPQNQGTDKRIEDINIDASQFLPAQHRFFTYSGSLTTPPCSENVLWCVMATPIEASPAQIAKFSQMFPQNARPVQPLNDRLVIEAI</sequence>
<evidence type="ECO:0000250" key="1"/>
<evidence type="ECO:0000255" key="2">
    <source>
        <dbReference type="PROSITE-ProRule" id="PRU00648"/>
    </source>
</evidence>
<evidence type="ECO:0000255" key="3">
    <source>
        <dbReference type="PROSITE-ProRule" id="PRU01134"/>
    </source>
</evidence>
<evidence type="ECO:0000305" key="4"/>
<dbReference type="EC" id="4.2.1.1"/>
<dbReference type="EMBL" id="U72708">
    <property type="protein sequence ID" value="AAC44831.1"/>
    <property type="molecule type" value="Genomic_DNA"/>
</dbReference>
<dbReference type="EMBL" id="BA000019">
    <property type="protein sequence ID" value="BAB74628.1"/>
    <property type="molecule type" value="Genomic_DNA"/>
</dbReference>
<dbReference type="PIR" id="AB2172">
    <property type="entry name" value="AB2172"/>
</dbReference>
<dbReference type="RefSeq" id="WP_010997080.1">
    <property type="nucleotide sequence ID" value="NZ_RSCN01000003.1"/>
</dbReference>
<dbReference type="SMR" id="P94170"/>
<dbReference type="STRING" id="103690.gene:10494965"/>
<dbReference type="KEGG" id="ana:all2929"/>
<dbReference type="eggNOG" id="COG3338">
    <property type="taxonomic scope" value="Bacteria"/>
</dbReference>
<dbReference type="OrthoDB" id="5327615at2"/>
<dbReference type="Proteomes" id="UP000002483">
    <property type="component" value="Chromosome"/>
</dbReference>
<dbReference type="GO" id="GO:0004089">
    <property type="term" value="F:carbonate dehydratase activity"/>
    <property type="evidence" value="ECO:0007669"/>
    <property type="project" value="UniProtKB-EC"/>
</dbReference>
<dbReference type="GO" id="GO:0008270">
    <property type="term" value="F:zinc ion binding"/>
    <property type="evidence" value="ECO:0007669"/>
    <property type="project" value="InterPro"/>
</dbReference>
<dbReference type="CDD" id="cd03124">
    <property type="entry name" value="alpha_CA_prokaryotic_like"/>
    <property type="match status" value="1"/>
</dbReference>
<dbReference type="Gene3D" id="3.10.200.10">
    <property type="entry name" value="Alpha carbonic anhydrase"/>
    <property type="match status" value="1"/>
</dbReference>
<dbReference type="InterPro" id="IPR041891">
    <property type="entry name" value="Alpha_CA_prokaryot-like"/>
</dbReference>
<dbReference type="InterPro" id="IPR001148">
    <property type="entry name" value="CA_dom"/>
</dbReference>
<dbReference type="InterPro" id="IPR036398">
    <property type="entry name" value="CA_dom_sf"/>
</dbReference>
<dbReference type="InterPro" id="IPR023561">
    <property type="entry name" value="Carbonic_anhydrase_a-class"/>
</dbReference>
<dbReference type="InterPro" id="IPR018338">
    <property type="entry name" value="Carbonic_anhydrase_a-class_CS"/>
</dbReference>
<dbReference type="InterPro" id="IPR006311">
    <property type="entry name" value="TAT_signal"/>
</dbReference>
<dbReference type="PANTHER" id="PTHR18952">
    <property type="entry name" value="CARBONIC ANHYDRASE"/>
    <property type="match status" value="1"/>
</dbReference>
<dbReference type="PANTHER" id="PTHR18952:SF265">
    <property type="entry name" value="CARBONIC ANHYDRASE"/>
    <property type="match status" value="1"/>
</dbReference>
<dbReference type="Pfam" id="PF00194">
    <property type="entry name" value="Carb_anhydrase"/>
    <property type="match status" value="1"/>
</dbReference>
<dbReference type="SMART" id="SM01057">
    <property type="entry name" value="Carb_anhydrase"/>
    <property type="match status" value="1"/>
</dbReference>
<dbReference type="SUPFAM" id="SSF51069">
    <property type="entry name" value="Carbonic anhydrase"/>
    <property type="match status" value="1"/>
</dbReference>
<dbReference type="PROSITE" id="PS00162">
    <property type="entry name" value="ALPHA_CA_1"/>
    <property type="match status" value="1"/>
</dbReference>
<dbReference type="PROSITE" id="PS51144">
    <property type="entry name" value="ALPHA_CA_2"/>
    <property type="match status" value="1"/>
</dbReference>
<dbReference type="PROSITE" id="PS51318">
    <property type="entry name" value="TAT"/>
    <property type="match status" value="1"/>
</dbReference>